<sequence>MNAQEANFDGLVGPTHNYAGLSFGNVASLNNEKSAANPKAAAKQGLRKMKQLADLGFAQGVLPPQERPSLRLLRELGFSGKDADVIAKAAKQAPELLAAASSASAMWTANAATVSPSADTSDGRVHFTPANLCSKLHRAIEHEATRRTLSTLFADPAHFAVHEALTGTPALGDEGAANHTRFCAEYGKPGIEFFVYGRAEYRRGPEPKRFPARQTFEASRAVAHRHGLAEEATVYAQQDPDVIDAGVFHNDVISVGNRDTLFTHERAFVNKQAIYDTLTAALDARGARLNVIEVPEAAVSVNDAVTSYLFNSQLLSRADGSQVLVVPQECRENGNVAAYLDELAAGNGPIHDVLVFDLRESMKNGGGPACLRLRVVLNEAERAAVTSNVWINDTLFTSLDTWIDRHYRDRLAPEDLADPALLEESRTALDELTQILRVGSLYDFQR</sequence>
<protein>
    <recommendedName>
        <fullName evidence="1">N-succinylarginine dihydrolase</fullName>
        <ecNumber evidence="1">3.5.3.23</ecNumber>
    </recommendedName>
</protein>
<dbReference type="EC" id="3.5.3.23" evidence="1"/>
<dbReference type="EMBL" id="CP000151">
    <property type="protein sequence ID" value="ABB07892.1"/>
    <property type="molecule type" value="Genomic_DNA"/>
</dbReference>
<dbReference type="RefSeq" id="WP_011351463.1">
    <property type="nucleotide sequence ID" value="NC_007510.1"/>
</dbReference>
<dbReference type="SMR" id="Q39I24"/>
<dbReference type="GeneID" id="45094200"/>
<dbReference type="KEGG" id="bur:Bcep18194_A4295"/>
<dbReference type="PATRIC" id="fig|482957.22.peg.1188"/>
<dbReference type="HOGENOM" id="CLU_053835_0_0_4"/>
<dbReference type="UniPathway" id="UPA00185">
    <property type="reaction ID" value="UER00280"/>
</dbReference>
<dbReference type="Proteomes" id="UP000002705">
    <property type="component" value="Chromosome 1"/>
</dbReference>
<dbReference type="GO" id="GO:0009015">
    <property type="term" value="F:N-succinylarginine dihydrolase activity"/>
    <property type="evidence" value="ECO:0007669"/>
    <property type="project" value="UniProtKB-UniRule"/>
</dbReference>
<dbReference type="GO" id="GO:0019544">
    <property type="term" value="P:arginine catabolic process to glutamate"/>
    <property type="evidence" value="ECO:0007669"/>
    <property type="project" value="UniProtKB-UniRule"/>
</dbReference>
<dbReference type="GO" id="GO:0019545">
    <property type="term" value="P:arginine catabolic process to succinate"/>
    <property type="evidence" value="ECO:0007669"/>
    <property type="project" value="UniProtKB-UniRule"/>
</dbReference>
<dbReference type="Gene3D" id="3.75.10.20">
    <property type="entry name" value="Succinylarginine dihydrolase"/>
    <property type="match status" value="1"/>
</dbReference>
<dbReference type="HAMAP" id="MF_01172">
    <property type="entry name" value="AstB"/>
    <property type="match status" value="1"/>
</dbReference>
<dbReference type="InterPro" id="IPR037031">
    <property type="entry name" value="AstB_sf"/>
</dbReference>
<dbReference type="InterPro" id="IPR007079">
    <property type="entry name" value="SuccinylArg_d-Hdrlase_AstB"/>
</dbReference>
<dbReference type="NCBIfam" id="TIGR03241">
    <property type="entry name" value="arg_catab_astB"/>
    <property type="match status" value="1"/>
</dbReference>
<dbReference type="NCBIfam" id="NF009789">
    <property type="entry name" value="PRK13281.1"/>
    <property type="match status" value="1"/>
</dbReference>
<dbReference type="PANTHER" id="PTHR30420">
    <property type="entry name" value="N-SUCCINYLARGININE DIHYDROLASE"/>
    <property type="match status" value="1"/>
</dbReference>
<dbReference type="PANTHER" id="PTHR30420:SF2">
    <property type="entry name" value="N-SUCCINYLARGININE DIHYDROLASE"/>
    <property type="match status" value="1"/>
</dbReference>
<dbReference type="Pfam" id="PF04996">
    <property type="entry name" value="AstB"/>
    <property type="match status" value="1"/>
</dbReference>
<dbReference type="SUPFAM" id="SSF55909">
    <property type="entry name" value="Pentein"/>
    <property type="match status" value="1"/>
</dbReference>
<organism>
    <name type="scientific">Burkholderia lata (strain ATCC 17760 / DSM 23089 / LMG 22485 / NCIMB 9086 / R18194 / 383)</name>
    <dbReference type="NCBI Taxonomy" id="482957"/>
    <lineage>
        <taxon>Bacteria</taxon>
        <taxon>Pseudomonadati</taxon>
        <taxon>Pseudomonadota</taxon>
        <taxon>Betaproteobacteria</taxon>
        <taxon>Burkholderiales</taxon>
        <taxon>Burkholderiaceae</taxon>
        <taxon>Burkholderia</taxon>
        <taxon>Burkholderia cepacia complex</taxon>
    </lineage>
</organism>
<evidence type="ECO:0000255" key="1">
    <source>
        <dbReference type="HAMAP-Rule" id="MF_01172"/>
    </source>
</evidence>
<reference key="1">
    <citation type="submission" date="2005-10" db="EMBL/GenBank/DDBJ databases">
        <title>Complete sequence of chromosome 1 of Burkholderia sp. 383.</title>
        <authorList>
            <consortium name="US DOE Joint Genome Institute"/>
            <person name="Copeland A."/>
            <person name="Lucas S."/>
            <person name="Lapidus A."/>
            <person name="Barry K."/>
            <person name="Detter J.C."/>
            <person name="Glavina T."/>
            <person name="Hammon N."/>
            <person name="Israni S."/>
            <person name="Pitluck S."/>
            <person name="Chain P."/>
            <person name="Malfatti S."/>
            <person name="Shin M."/>
            <person name="Vergez L."/>
            <person name="Schmutz J."/>
            <person name="Larimer F."/>
            <person name="Land M."/>
            <person name="Kyrpides N."/>
            <person name="Lykidis A."/>
            <person name="Richardson P."/>
        </authorList>
    </citation>
    <scope>NUCLEOTIDE SEQUENCE [LARGE SCALE GENOMIC DNA]</scope>
    <source>
        <strain>ATCC 17760 / DSM 23089 / LMG 22485 / NCIMB 9086 / R18194 / 383</strain>
    </source>
</reference>
<name>ASTB_BURL3</name>
<keyword id="KW-0056">Arginine metabolism</keyword>
<keyword id="KW-0378">Hydrolase</keyword>
<feature type="chain" id="PRO_0000262342" description="N-succinylarginine dihydrolase">
    <location>
        <begin position="1"/>
        <end position="446"/>
    </location>
</feature>
<feature type="active site" evidence="1">
    <location>
        <position position="174"/>
    </location>
</feature>
<feature type="active site" evidence="1">
    <location>
        <position position="249"/>
    </location>
</feature>
<feature type="active site" description="Nucleophile" evidence="1">
    <location>
        <position position="370"/>
    </location>
</feature>
<feature type="binding site" evidence="1">
    <location>
        <begin position="19"/>
        <end position="28"/>
    </location>
    <ligand>
        <name>substrate</name>
    </ligand>
</feature>
<feature type="binding site" evidence="1">
    <location>
        <position position="110"/>
    </location>
    <ligand>
        <name>substrate</name>
    </ligand>
</feature>
<feature type="binding site" evidence="1">
    <location>
        <begin position="137"/>
        <end position="138"/>
    </location>
    <ligand>
        <name>substrate</name>
    </ligand>
</feature>
<feature type="binding site" evidence="1">
    <location>
        <position position="213"/>
    </location>
    <ligand>
        <name>substrate</name>
    </ligand>
</feature>
<feature type="binding site" evidence="1">
    <location>
        <position position="251"/>
    </location>
    <ligand>
        <name>substrate</name>
    </ligand>
</feature>
<feature type="binding site" evidence="1">
    <location>
        <position position="364"/>
    </location>
    <ligand>
        <name>substrate</name>
    </ligand>
</feature>
<gene>
    <name evidence="1" type="primary">astB</name>
    <name type="ordered locus">Bcep18194_A4295</name>
</gene>
<accession>Q39I24</accession>
<comment type="function">
    <text evidence="1">Catalyzes the hydrolysis of N(2)-succinylarginine into N(2)-succinylornithine, ammonia and CO(2).</text>
</comment>
<comment type="catalytic activity">
    <reaction evidence="1">
        <text>N(2)-succinyl-L-arginine + 2 H2O + 2 H(+) = N(2)-succinyl-L-ornithine + 2 NH4(+) + CO2</text>
        <dbReference type="Rhea" id="RHEA:19533"/>
        <dbReference type="ChEBI" id="CHEBI:15377"/>
        <dbReference type="ChEBI" id="CHEBI:15378"/>
        <dbReference type="ChEBI" id="CHEBI:16526"/>
        <dbReference type="ChEBI" id="CHEBI:28938"/>
        <dbReference type="ChEBI" id="CHEBI:58241"/>
        <dbReference type="ChEBI" id="CHEBI:58514"/>
        <dbReference type="EC" id="3.5.3.23"/>
    </reaction>
</comment>
<comment type="pathway">
    <text evidence="1">Amino-acid degradation; L-arginine degradation via AST pathway; L-glutamate and succinate from L-arginine: step 2/5.</text>
</comment>
<comment type="subunit">
    <text evidence="1">Homodimer.</text>
</comment>
<comment type="similarity">
    <text evidence="1">Belongs to the succinylarginine dihydrolase family.</text>
</comment>
<proteinExistence type="inferred from homology"/>